<organism>
    <name type="scientific">Noctilio leporinus</name>
    <name type="common">Greater bulldog bat</name>
    <dbReference type="NCBI Taxonomy" id="94963"/>
    <lineage>
        <taxon>Eukaryota</taxon>
        <taxon>Metazoa</taxon>
        <taxon>Chordata</taxon>
        <taxon>Craniata</taxon>
        <taxon>Vertebrata</taxon>
        <taxon>Euteleostomi</taxon>
        <taxon>Mammalia</taxon>
        <taxon>Eutheria</taxon>
        <taxon>Laurasiatheria</taxon>
        <taxon>Chiroptera</taxon>
        <taxon>Yangochiroptera</taxon>
        <taxon>Noctilionidae</taxon>
        <taxon>Noctilio</taxon>
    </lineage>
</organism>
<geneLocation type="mitochondrion"/>
<keyword id="KW-0249">Electron transport</keyword>
<keyword id="KW-0349">Heme</keyword>
<keyword id="KW-0408">Iron</keyword>
<keyword id="KW-0472">Membrane</keyword>
<keyword id="KW-0479">Metal-binding</keyword>
<keyword id="KW-0496">Mitochondrion</keyword>
<keyword id="KW-0999">Mitochondrion inner membrane</keyword>
<keyword id="KW-0679">Respiratory chain</keyword>
<keyword id="KW-0812">Transmembrane</keyword>
<keyword id="KW-1133">Transmembrane helix</keyword>
<keyword id="KW-0813">Transport</keyword>
<keyword id="KW-0830">Ubiquinone</keyword>
<dbReference type="EMBL" id="AF330794">
    <property type="protein sequence ID" value="AAL59423.1"/>
    <property type="molecule type" value="Genomic_DNA"/>
</dbReference>
<dbReference type="EMBL" id="AF330795">
    <property type="protein sequence ID" value="AAL59424.1"/>
    <property type="molecule type" value="Genomic_DNA"/>
</dbReference>
<dbReference type="EMBL" id="AF330796">
    <property type="protein sequence ID" value="AAL59425.1"/>
    <property type="molecule type" value="Genomic_DNA"/>
</dbReference>
<dbReference type="EMBL" id="AF330797">
    <property type="protein sequence ID" value="AAL59426.1"/>
    <property type="molecule type" value="Genomic_DNA"/>
</dbReference>
<dbReference type="EMBL" id="AF330798">
    <property type="protein sequence ID" value="AAL59427.1"/>
    <property type="molecule type" value="Genomic_DNA"/>
</dbReference>
<dbReference type="EMBL" id="AF330799">
    <property type="protein sequence ID" value="AAL59428.1"/>
    <property type="molecule type" value="Genomic_DNA"/>
</dbReference>
<dbReference type="EMBL" id="AF330800">
    <property type="protein sequence ID" value="AAL59429.1"/>
    <property type="molecule type" value="Genomic_DNA"/>
</dbReference>
<dbReference type="EMBL" id="AF330801">
    <property type="protein sequence ID" value="AAL59430.1"/>
    <property type="molecule type" value="Genomic_DNA"/>
</dbReference>
<dbReference type="EMBL" id="AF330802">
    <property type="protein sequence ID" value="AAL59431.1"/>
    <property type="molecule type" value="Genomic_DNA"/>
</dbReference>
<dbReference type="SMR" id="Q8W7G4"/>
<dbReference type="GO" id="GO:0005743">
    <property type="term" value="C:mitochondrial inner membrane"/>
    <property type="evidence" value="ECO:0007669"/>
    <property type="project" value="UniProtKB-SubCell"/>
</dbReference>
<dbReference type="GO" id="GO:0045275">
    <property type="term" value="C:respiratory chain complex III"/>
    <property type="evidence" value="ECO:0007669"/>
    <property type="project" value="InterPro"/>
</dbReference>
<dbReference type="GO" id="GO:0046872">
    <property type="term" value="F:metal ion binding"/>
    <property type="evidence" value="ECO:0007669"/>
    <property type="project" value="UniProtKB-KW"/>
</dbReference>
<dbReference type="GO" id="GO:0008121">
    <property type="term" value="F:ubiquinol-cytochrome-c reductase activity"/>
    <property type="evidence" value="ECO:0007669"/>
    <property type="project" value="InterPro"/>
</dbReference>
<dbReference type="GO" id="GO:0006122">
    <property type="term" value="P:mitochondrial electron transport, ubiquinol to cytochrome c"/>
    <property type="evidence" value="ECO:0007669"/>
    <property type="project" value="TreeGrafter"/>
</dbReference>
<dbReference type="CDD" id="cd00290">
    <property type="entry name" value="cytochrome_b_C"/>
    <property type="match status" value="1"/>
</dbReference>
<dbReference type="CDD" id="cd00284">
    <property type="entry name" value="Cytochrome_b_N"/>
    <property type="match status" value="1"/>
</dbReference>
<dbReference type="FunFam" id="1.20.810.10:FF:000002">
    <property type="entry name" value="Cytochrome b"/>
    <property type="match status" value="1"/>
</dbReference>
<dbReference type="Gene3D" id="1.20.810.10">
    <property type="entry name" value="Cytochrome Bc1 Complex, Chain C"/>
    <property type="match status" value="1"/>
</dbReference>
<dbReference type="InterPro" id="IPR005798">
    <property type="entry name" value="Cyt_b/b6_C"/>
</dbReference>
<dbReference type="InterPro" id="IPR036150">
    <property type="entry name" value="Cyt_b/b6_C_sf"/>
</dbReference>
<dbReference type="InterPro" id="IPR005797">
    <property type="entry name" value="Cyt_b/b6_N"/>
</dbReference>
<dbReference type="InterPro" id="IPR027387">
    <property type="entry name" value="Cytb/b6-like_sf"/>
</dbReference>
<dbReference type="InterPro" id="IPR030689">
    <property type="entry name" value="Cytochrome_b"/>
</dbReference>
<dbReference type="InterPro" id="IPR048260">
    <property type="entry name" value="Cytochrome_b_C_euk/bac"/>
</dbReference>
<dbReference type="InterPro" id="IPR048259">
    <property type="entry name" value="Cytochrome_b_N_euk/bac"/>
</dbReference>
<dbReference type="InterPro" id="IPR016174">
    <property type="entry name" value="Di-haem_cyt_TM"/>
</dbReference>
<dbReference type="PANTHER" id="PTHR19271">
    <property type="entry name" value="CYTOCHROME B"/>
    <property type="match status" value="1"/>
</dbReference>
<dbReference type="PANTHER" id="PTHR19271:SF16">
    <property type="entry name" value="CYTOCHROME B"/>
    <property type="match status" value="1"/>
</dbReference>
<dbReference type="Pfam" id="PF00032">
    <property type="entry name" value="Cytochrom_B_C"/>
    <property type="match status" value="1"/>
</dbReference>
<dbReference type="Pfam" id="PF00033">
    <property type="entry name" value="Cytochrome_B"/>
    <property type="match status" value="1"/>
</dbReference>
<dbReference type="PIRSF" id="PIRSF038885">
    <property type="entry name" value="COB"/>
    <property type="match status" value="1"/>
</dbReference>
<dbReference type="SUPFAM" id="SSF81648">
    <property type="entry name" value="a domain/subunit of cytochrome bc1 complex (Ubiquinol-cytochrome c reductase)"/>
    <property type="match status" value="1"/>
</dbReference>
<dbReference type="SUPFAM" id="SSF81342">
    <property type="entry name" value="Transmembrane di-heme cytochromes"/>
    <property type="match status" value="1"/>
</dbReference>
<dbReference type="PROSITE" id="PS51003">
    <property type="entry name" value="CYTB_CTER"/>
    <property type="match status" value="1"/>
</dbReference>
<dbReference type="PROSITE" id="PS51002">
    <property type="entry name" value="CYTB_NTER"/>
    <property type="match status" value="1"/>
</dbReference>
<comment type="function">
    <text evidence="2">Component of the ubiquinol-cytochrome c reductase complex (complex III or cytochrome b-c1 complex) that is part of the mitochondrial respiratory chain. The b-c1 complex mediates electron transfer from ubiquinol to cytochrome c. Contributes to the generation of a proton gradient across the mitochondrial membrane that is then used for ATP synthesis.</text>
</comment>
<comment type="cofactor">
    <cofactor evidence="2">
        <name>heme b</name>
        <dbReference type="ChEBI" id="CHEBI:60344"/>
    </cofactor>
    <text evidence="2">Binds 2 heme b groups non-covalently.</text>
</comment>
<comment type="subunit">
    <text evidence="2">The cytochrome bc1 complex contains 11 subunits: 3 respiratory subunits (MT-CYB, CYC1 and UQCRFS1), 2 core proteins (UQCRC1 and UQCRC2) and 6 low-molecular weight proteins (UQCRH/QCR6, UQCRB/QCR7, UQCRQ/QCR8, UQCR10/QCR9, UQCR11/QCR10 and a cleavage product of UQCRFS1). This cytochrome bc1 complex then forms a dimer.</text>
</comment>
<comment type="subcellular location">
    <subcellularLocation>
        <location evidence="2">Mitochondrion inner membrane</location>
        <topology evidence="2">Multi-pass membrane protein</topology>
    </subcellularLocation>
</comment>
<comment type="miscellaneous">
    <text evidence="1">Heme 1 (or BL or b562) is low-potential and absorbs at about 562 nm, and heme 2 (or BH or b566) is high-potential and absorbs at about 566 nm.</text>
</comment>
<comment type="similarity">
    <text evidence="3 4">Belongs to the cytochrome b family.</text>
</comment>
<comment type="caution">
    <text evidence="2">The full-length protein contains only eight transmembrane helices, not nine as predicted by bioinformatics tools.</text>
</comment>
<proteinExistence type="inferred from homology"/>
<name>CYB_NOCLE</name>
<gene>
    <name type="primary">MT-CYB</name>
    <name type="synonym">COB</name>
    <name type="synonym">CYTB</name>
    <name type="synonym">MTCYB</name>
</gene>
<accession>Q8W7G4</accession>
<accession>Q8WDK8</accession>
<accession>Q8WDK9</accession>
<accession>Q8WDL0</accession>
<evidence type="ECO:0000250" key="1"/>
<evidence type="ECO:0000250" key="2">
    <source>
        <dbReference type="UniProtKB" id="P00157"/>
    </source>
</evidence>
<evidence type="ECO:0000255" key="3">
    <source>
        <dbReference type="PROSITE-ProRule" id="PRU00967"/>
    </source>
</evidence>
<evidence type="ECO:0000255" key="4">
    <source>
        <dbReference type="PROSITE-ProRule" id="PRU00968"/>
    </source>
</evidence>
<feature type="chain" id="PRO_0000061279" description="Cytochrome b">
    <location>
        <begin position="1"/>
        <end position="379"/>
    </location>
</feature>
<feature type="transmembrane region" description="Helical" evidence="2">
    <location>
        <begin position="33"/>
        <end position="53"/>
    </location>
</feature>
<feature type="transmembrane region" description="Helical" evidence="2">
    <location>
        <begin position="77"/>
        <end position="98"/>
    </location>
</feature>
<feature type="transmembrane region" description="Helical" evidence="2">
    <location>
        <begin position="113"/>
        <end position="133"/>
    </location>
</feature>
<feature type="transmembrane region" description="Helical" evidence="2">
    <location>
        <begin position="178"/>
        <end position="198"/>
    </location>
</feature>
<feature type="transmembrane region" description="Helical" evidence="2">
    <location>
        <begin position="226"/>
        <end position="246"/>
    </location>
</feature>
<feature type="transmembrane region" description="Helical" evidence="2">
    <location>
        <begin position="288"/>
        <end position="308"/>
    </location>
</feature>
<feature type="transmembrane region" description="Helical" evidence="2">
    <location>
        <begin position="320"/>
        <end position="340"/>
    </location>
</feature>
<feature type="transmembrane region" description="Helical" evidence="2">
    <location>
        <begin position="347"/>
        <end position="367"/>
    </location>
</feature>
<feature type="binding site" description="axial binding residue" evidence="2">
    <location>
        <position position="83"/>
    </location>
    <ligand>
        <name>heme b</name>
        <dbReference type="ChEBI" id="CHEBI:60344"/>
        <label>b562</label>
    </ligand>
    <ligandPart>
        <name>Fe</name>
        <dbReference type="ChEBI" id="CHEBI:18248"/>
    </ligandPart>
</feature>
<feature type="binding site" description="axial binding residue" evidence="2">
    <location>
        <position position="97"/>
    </location>
    <ligand>
        <name>heme b</name>
        <dbReference type="ChEBI" id="CHEBI:60344"/>
        <label>b566</label>
    </ligand>
    <ligandPart>
        <name>Fe</name>
        <dbReference type="ChEBI" id="CHEBI:18248"/>
    </ligandPart>
</feature>
<feature type="binding site" description="axial binding residue" evidence="2">
    <location>
        <position position="182"/>
    </location>
    <ligand>
        <name>heme b</name>
        <dbReference type="ChEBI" id="CHEBI:60344"/>
        <label>b562</label>
    </ligand>
    <ligandPart>
        <name>Fe</name>
        <dbReference type="ChEBI" id="CHEBI:18248"/>
    </ligandPart>
</feature>
<feature type="binding site" description="axial binding residue" evidence="2">
    <location>
        <position position="196"/>
    </location>
    <ligand>
        <name>heme b</name>
        <dbReference type="ChEBI" id="CHEBI:60344"/>
        <label>b566</label>
    </ligand>
    <ligandPart>
        <name>Fe</name>
        <dbReference type="ChEBI" id="CHEBI:18248"/>
    </ligandPart>
</feature>
<feature type="binding site" evidence="2">
    <location>
        <position position="201"/>
    </location>
    <ligand>
        <name>a ubiquinone</name>
        <dbReference type="ChEBI" id="CHEBI:16389"/>
    </ligand>
</feature>
<feature type="sequence variant" description="In strain: Isolate CN 97682.">
    <original>I</original>
    <variation>V</variation>
    <location>
        <position position="211"/>
    </location>
</feature>
<feature type="sequence variant" description="In strain: Isolate TK 18513.">
    <original>D</original>
    <variation>N</variation>
    <location>
        <position position="214"/>
    </location>
</feature>
<feature type="sequence variant" description="In strain: Isolate TK 15708 and Isolate TK 18513.">
    <original>T</original>
    <variation>I</variation>
    <location>
        <position position="215"/>
    </location>
</feature>
<sequence>MTNLRKSHPILKIINSSLVDLPVPVSISSWWNFGSLLMACLAVQILTGLFLAMHYTSDTATAFNSVTHICRDVNYGWIIRYLHANGASMFFICLYLHIGRGLYYGSYLYSETWNIGILLLFATMATAFMGYVLPWGQMSFWGATVITNLLSAIPYVGTDLVQWIWGGFSVDKATLTRFFAFHFLLPFIIAALAMVHLLFLHETGSNNPTGIPSDTDMIPFHPYHTIKDILGLMLMLSVLSALVLFSPDLLGDPDNYTPANPLNTPPHIKPEWYFLFAYAILRSIPNKLGGVLALVLSILVLAVIPFLHTSKQRSMMFRPLSQCLFWILTSDLLILTWIGGQPVEHPYIIIGQVASIMYFTIILIIMPLTSLLENHLLKW</sequence>
<protein>
    <recommendedName>
        <fullName>Cytochrome b</fullName>
    </recommendedName>
    <alternativeName>
        <fullName>Complex III subunit 3</fullName>
    </alternativeName>
    <alternativeName>
        <fullName>Complex III subunit III</fullName>
    </alternativeName>
    <alternativeName>
        <fullName>Cytochrome b-c1 complex subunit 3</fullName>
    </alternativeName>
    <alternativeName>
        <fullName>Ubiquinol-cytochrome-c reductase complex cytochrome b subunit</fullName>
    </alternativeName>
</protein>
<reference key="1">
    <citation type="submission" date="2000-12" db="EMBL/GenBank/DDBJ databases">
        <title>Molecular evidence for evolution of piscivory in Noctilio (Chiroptera: Noctilionidae).</title>
        <authorList>
            <person name="Lewis-Oritt N."/>
            <person name="Van Den Bussche R.A."/>
            <person name="Baker R.J."/>
        </authorList>
    </citation>
    <scope>NUCLEOTIDE SEQUENCE [GENOMIC DNA]</scope>
    <source>
        <strain>Isolate CN 104207</strain>
        <strain>Isolate CN 97682</strain>
        <strain>Isolate TK 10224</strain>
        <strain>Isolate TK 15708</strain>
        <strain>Isolate TK 18513</strain>
        <strain>Isolate TK 18700</strain>
        <strain>Isolate TK 19126</strain>
        <strain>Isolate TK 22848</strain>
        <strain>Isolate TK 86638</strain>
    </source>
</reference>